<accession>B5QXT6</accession>
<dbReference type="EC" id="1.16.-.-" evidence="1"/>
<dbReference type="EMBL" id="AM933172">
    <property type="protein sequence ID" value="CAR32361.1"/>
    <property type="molecule type" value="Genomic_DNA"/>
</dbReference>
<dbReference type="RefSeq" id="WP_000100805.1">
    <property type="nucleotide sequence ID" value="NC_011294.1"/>
</dbReference>
<dbReference type="SMR" id="B5QXT6"/>
<dbReference type="KEGG" id="set:SEN0776"/>
<dbReference type="HOGENOM" id="CLU_098183_1_2_6"/>
<dbReference type="Proteomes" id="UP000000613">
    <property type="component" value="Chromosome"/>
</dbReference>
<dbReference type="GO" id="GO:0005737">
    <property type="term" value="C:cytoplasm"/>
    <property type="evidence" value="ECO:0007669"/>
    <property type="project" value="UniProtKB-SubCell"/>
</dbReference>
<dbReference type="GO" id="GO:0003677">
    <property type="term" value="F:DNA binding"/>
    <property type="evidence" value="ECO:0007669"/>
    <property type="project" value="UniProtKB-UniRule"/>
</dbReference>
<dbReference type="GO" id="GO:0008199">
    <property type="term" value="F:ferric iron binding"/>
    <property type="evidence" value="ECO:0007669"/>
    <property type="project" value="UniProtKB-UniRule"/>
</dbReference>
<dbReference type="GO" id="GO:0016722">
    <property type="term" value="F:oxidoreductase activity, acting on metal ions"/>
    <property type="evidence" value="ECO:0007669"/>
    <property type="project" value="InterPro"/>
</dbReference>
<dbReference type="GO" id="GO:0030261">
    <property type="term" value="P:chromosome condensation"/>
    <property type="evidence" value="ECO:0007669"/>
    <property type="project" value="UniProtKB-KW"/>
</dbReference>
<dbReference type="GO" id="GO:0006879">
    <property type="term" value="P:intracellular iron ion homeostasis"/>
    <property type="evidence" value="ECO:0007669"/>
    <property type="project" value="UniProtKB-KW"/>
</dbReference>
<dbReference type="CDD" id="cd01043">
    <property type="entry name" value="DPS"/>
    <property type="match status" value="1"/>
</dbReference>
<dbReference type="FunFam" id="1.20.1260.10:FF:000003">
    <property type="entry name" value="DNA protection during starvation protein"/>
    <property type="match status" value="1"/>
</dbReference>
<dbReference type="Gene3D" id="1.20.1260.10">
    <property type="match status" value="1"/>
</dbReference>
<dbReference type="HAMAP" id="MF_01441">
    <property type="entry name" value="Dps"/>
    <property type="match status" value="1"/>
</dbReference>
<dbReference type="InterPro" id="IPR002177">
    <property type="entry name" value="DPS_DNA-bd"/>
</dbReference>
<dbReference type="InterPro" id="IPR023188">
    <property type="entry name" value="DPS_DNA-bd_CS"/>
</dbReference>
<dbReference type="InterPro" id="IPR023067">
    <property type="entry name" value="Dps_gammaproteobac"/>
</dbReference>
<dbReference type="InterPro" id="IPR012347">
    <property type="entry name" value="Ferritin-like"/>
</dbReference>
<dbReference type="InterPro" id="IPR009078">
    <property type="entry name" value="Ferritin-like_SF"/>
</dbReference>
<dbReference type="InterPro" id="IPR008331">
    <property type="entry name" value="Ferritin_DPS_dom"/>
</dbReference>
<dbReference type="NCBIfam" id="NF006975">
    <property type="entry name" value="PRK09448.1"/>
    <property type="match status" value="1"/>
</dbReference>
<dbReference type="PANTHER" id="PTHR42932:SF3">
    <property type="entry name" value="DNA PROTECTION DURING STARVATION PROTEIN"/>
    <property type="match status" value="1"/>
</dbReference>
<dbReference type="PANTHER" id="PTHR42932">
    <property type="entry name" value="GENERAL STRESS PROTEIN 20U"/>
    <property type="match status" value="1"/>
</dbReference>
<dbReference type="Pfam" id="PF00210">
    <property type="entry name" value="Ferritin"/>
    <property type="match status" value="1"/>
</dbReference>
<dbReference type="PIRSF" id="PIRSF005900">
    <property type="entry name" value="Dps"/>
    <property type="match status" value="1"/>
</dbReference>
<dbReference type="PRINTS" id="PR01346">
    <property type="entry name" value="HELNAPAPROT"/>
</dbReference>
<dbReference type="SUPFAM" id="SSF47240">
    <property type="entry name" value="Ferritin-like"/>
    <property type="match status" value="1"/>
</dbReference>
<dbReference type="PROSITE" id="PS00818">
    <property type="entry name" value="DPS_1"/>
    <property type="match status" value="1"/>
</dbReference>
<dbReference type="PROSITE" id="PS00819">
    <property type="entry name" value="DPS_2"/>
    <property type="match status" value="1"/>
</dbReference>
<keyword id="KW-0963">Cytoplasm</keyword>
<keyword id="KW-0226">DNA condensation</keyword>
<keyword id="KW-0238">DNA-binding</keyword>
<keyword id="KW-0408">Iron</keyword>
<keyword id="KW-0409">Iron storage</keyword>
<keyword id="KW-0479">Metal-binding</keyword>
<keyword id="KW-0560">Oxidoreductase</keyword>
<proteinExistence type="inferred from homology"/>
<gene>
    <name evidence="1" type="primary">dps</name>
    <name type="ordered locus">SEN0776</name>
</gene>
<sequence length="167" mass="18717">MSTAKLVKTKASNLLYTRNDVSESDKKATVELLNRQVIQFIDLSLITKQAHWNMRGANFIAVHEMLDGFRTALTDHLDTMAERAVQLGGVALGTTQVINSKTPLKSYPLDIHNVQDHLKELADRYAVVANDVRKAIGEAKDEDTADIFTAASRDLDKFLWFIESNIE</sequence>
<protein>
    <recommendedName>
        <fullName evidence="1">DNA protection during starvation protein</fullName>
        <ecNumber evidence="1">1.16.-.-</ecNumber>
    </recommendedName>
</protein>
<name>DPS_SALEP</name>
<organism>
    <name type="scientific">Salmonella enteritidis PT4 (strain P125109)</name>
    <dbReference type="NCBI Taxonomy" id="550537"/>
    <lineage>
        <taxon>Bacteria</taxon>
        <taxon>Pseudomonadati</taxon>
        <taxon>Pseudomonadota</taxon>
        <taxon>Gammaproteobacteria</taxon>
        <taxon>Enterobacterales</taxon>
        <taxon>Enterobacteriaceae</taxon>
        <taxon>Salmonella</taxon>
    </lineage>
</organism>
<comment type="function">
    <text evidence="1">During stationary phase, binds the chromosome non-specifically, forming a highly ordered and stable dps-DNA co-crystal within which chromosomal DNA is condensed and protected from diverse damages. It protects DNA from oxidative damage by sequestering intracellular Fe(2+) ion and storing it in the form of Fe(3+) oxyhydroxide mineral, which can be released after reduction. One hydrogen peroxide oxidizes two Fe(2+) ions, which prevents hydroxyl radical production by the Fenton reaction.</text>
</comment>
<comment type="catalytic activity">
    <reaction evidence="1">
        <text>2 Fe(2+) + H2O2 + 2 H(+) = 2 Fe(3+) + 2 H2O</text>
        <dbReference type="Rhea" id="RHEA:48712"/>
        <dbReference type="ChEBI" id="CHEBI:15377"/>
        <dbReference type="ChEBI" id="CHEBI:15378"/>
        <dbReference type="ChEBI" id="CHEBI:16240"/>
        <dbReference type="ChEBI" id="CHEBI:29033"/>
        <dbReference type="ChEBI" id="CHEBI:29034"/>
    </reaction>
</comment>
<comment type="subunit">
    <text evidence="1">Homododecamer. The 12 subunits form a hollow sphere into which the mineral iron core of up to 500 Fe(3+) can be deposited.</text>
</comment>
<comment type="subcellular location">
    <subcellularLocation>
        <location evidence="1">Cytoplasm</location>
    </subcellularLocation>
</comment>
<comment type="similarity">
    <text evidence="1">Belongs to the Dps family.</text>
</comment>
<reference key="1">
    <citation type="journal article" date="2008" name="Genome Res.">
        <title>Comparative genome analysis of Salmonella enteritidis PT4 and Salmonella gallinarum 287/91 provides insights into evolutionary and host adaptation pathways.</title>
        <authorList>
            <person name="Thomson N.R."/>
            <person name="Clayton D.J."/>
            <person name="Windhorst D."/>
            <person name="Vernikos G."/>
            <person name="Davidson S."/>
            <person name="Churcher C."/>
            <person name="Quail M.A."/>
            <person name="Stevens M."/>
            <person name="Jones M.A."/>
            <person name="Watson M."/>
            <person name="Barron A."/>
            <person name="Layton A."/>
            <person name="Pickard D."/>
            <person name="Kingsley R.A."/>
            <person name="Bignell A."/>
            <person name="Clark L."/>
            <person name="Harris B."/>
            <person name="Ormond D."/>
            <person name="Abdellah Z."/>
            <person name="Brooks K."/>
            <person name="Cherevach I."/>
            <person name="Chillingworth T."/>
            <person name="Woodward J."/>
            <person name="Norberczak H."/>
            <person name="Lord A."/>
            <person name="Arrowsmith C."/>
            <person name="Jagels K."/>
            <person name="Moule S."/>
            <person name="Mungall K."/>
            <person name="Saunders M."/>
            <person name="Whitehead S."/>
            <person name="Chabalgoity J.A."/>
            <person name="Maskell D."/>
            <person name="Humphreys T."/>
            <person name="Roberts M."/>
            <person name="Barrow P.A."/>
            <person name="Dougan G."/>
            <person name="Parkhill J."/>
        </authorList>
    </citation>
    <scope>NUCLEOTIDE SEQUENCE [LARGE SCALE GENOMIC DNA]</scope>
    <source>
        <strain>P125109</strain>
    </source>
</reference>
<evidence type="ECO:0000255" key="1">
    <source>
        <dbReference type="HAMAP-Rule" id="MF_01441"/>
    </source>
</evidence>
<feature type="chain" id="PRO_1000145911" description="DNA protection during starvation protein">
    <location>
        <begin position="1"/>
        <end position="167"/>
    </location>
</feature>
<feature type="binding site" evidence="1">
    <location>
        <position position="51"/>
    </location>
    <ligand>
        <name>Fe cation</name>
        <dbReference type="ChEBI" id="CHEBI:24875"/>
    </ligand>
</feature>
<feature type="binding site" evidence="1">
    <location>
        <position position="78"/>
    </location>
    <ligand>
        <name>Fe cation</name>
        <dbReference type="ChEBI" id="CHEBI:24875"/>
    </ligand>
</feature>
<feature type="binding site" evidence="1">
    <location>
        <position position="82"/>
    </location>
    <ligand>
        <name>Fe cation</name>
        <dbReference type="ChEBI" id="CHEBI:24875"/>
    </ligand>
</feature>